<reference key="1">
    <citation type="journal article" date="2000" name="Nature">
        <title>The genome sequence of the food-borne pathogen Campylobacter jejuni reveals hypervariable sequences.</title>
        <authorList>
            <person name="Parkhill J."/>
            <person name="Wren B.W."/>
            <person name="Mungall K.L."/>
            <person name="Ketley J.M."/>
            <person name="Churcher C.M."/>
            <person name="Basham D."/>
            <person name="Chillingworth T."/>
            <person name="Davies R.M."/>
            <person name="Feltwell T."/>
            <person name="Holroyd S."/>
            <person name="Jagels K."/>
            <person name="Karlyshev A.V."/>
            <person name="Moule S."/>
            <person name="Pallen M.J."/>
            <person name="Penn C.W."/>
            <person name="Quail M.A."/>
            <person name="Rajandream M.A."/>
            <person name="Rutherford K.M."/>
            <person name="van Vliet A.H.M."/>
            <person name="Whitehead S."/>
            <person name="Barrell B.G."/>
        </authorList>
    </citation>
    <scope>NUCLEOTIDE SEQUENCE [LARGE SCALE GENOMIC DNA]</scope>
    <source>
        <strain>ATCC 700819 / NCTC 11168</strain>
    </source>
</reference>
<comment type="function">
    <text evidence="1">IGPS catalyzes the conversion of PRFAR and glutamine to IGP, AICAR and glutamate. The HisH subunit provides the glutamine amidotransferase activity that produces the ammonia necessary to HisF for the synthesis of IGP and AICAR (By similarity).</text>
</comment>
<comment type="catalytic activity">
    <reaction>
        <text>5-[(5-phospho-1-deoxy-D-ribulos-1-ylimino)methylamino]-1-(5-phospho-beta-D-ribosyl)imidazole-4-carboxamide + L-glutamine = D-erythro-1-(imidazol-4-yl)glycerol 3-phosphate + 5-amino-1-(5-phospho-beta-D-ribosyl)imidazole-4-carboxamide + L-glutamate + H(+)</text>
        <dbReference type="Rhea" id="RHEA:24793"/>
        <dbReference type="ChEBI" id="CHEBI:15378"/>
        <dbReference type="ChEBI" id="CHEBI:29985"/>
        <dbReference type="ChEBI" id="CHEBI:58278"/>
        <dbReference type="ChEBI" id="CHEBI:58359"/>
        <dbReference type="ChEBI" id="CHEBI:58475"/>
        <dbReference type="ChEBI" id="CHEBI:58525"/>
        <dbReference type="EC" id="4.3.2.10"/>
    </reaction>
</comment>
<comment type="catalytic activity">
    <reaction>
        <text>L-glutamine + H2O = L-glutamate + NH4(+)</text>
        <dbReference type="Rhea" id="RHEA:15889"/>
        <dbReference type="ChEBI" id="CHEBI:15377"/>
        <dbReference type="ChEBI" id="CHEBI:28938"/>
        <dbReference type="ChEBI" id="CHEBI:29985"/>
        <dbReference type="ChEBI" id="CHEBI:58359"/>
        <dbReference type="EC" id="3.5.1.2"/>
    </reaction>
</comment>
<comment type="pathway">
    <text>Amino-acid biosynthesis; L-histidine biosynthesis; L-histidine from 5-phospho-alpha-D-ribose 1-diphosphate: step 5/9.</text>
</comment>
<comment type="subunit">
    <text evidence="1">Heterodimer of HisH and HisF.</text>
</comment>
<comment type="subcellular location">
    <subcellularLocation>
        <location evidence="1">Cytoplasm</location>
    </subcellularLocation>
</comment>
<keyword id="KW-0028">Amino-acid biosynthesis</keyword>
<keyword id="KW-0963">Cytoplasm</keyword>
<keyword id="KW-0315">Glutamine amidotransferase</keyword>
<keyword id="KW-0368">Histidine biosynthesis</keyword>
<keyword id="KW-0378">Hydrolase</keyword>
<keyword id="KW-0456">Lyase</keyword>
<keyword id="KW-1185">Reference proteome</keyword>
<dbReference type="EC" id="4.3.2.10"/>
<dbReference type="EC" id="3.5.1.2"/>
<dbReference type="EMBL" id="AL111168">
    <property type="protein sequence ID" value="CAL35697.1"/>
    <property type="molecule type" value="Genomic_DNA"/>
</dbReference>
<dbReference type="PIR" id="F81255">
    <property type="entry name" value="F81255"/>
</dbReference>
<dbReference type="SMR" id="Q9PM75"/>
<dbReference type="IntAct" id="Q9PM75">
    <property type="interactions" value="25"/>
</dbReference>
<dbReference type="STRING" id="192222.Cj1600"/>
<dbReference type="PaxDb" id="192222-Cj1600"/>
<dbReference type="EnsemblBacteria" id="CAL35697">
    <property type="protein sequence ID" value="CAL35697"/>
    <property type="gene ID" value="Cj1600"/>
</dbReference>
<dbReference type="KEGG" id="cje:Cj1600"/>
<dbReference type="PATRIC" id="fig|192222.6.peg.1576"/>
<dbReference type="eggNOG" id="COG0118">
    <property type="taxonomic scope" value="Bacteria"/>
</dbReference>
<dbReference type="HOGENOM" id="CLU_071837_0_0_7"/>
<dbReference type="OrthoDB" id="9807749at2"/>
<dbReference type="UniPathway" id="UPA00031">
    <property type="reaction ID" value="UER00010"/>
</dbReference>
<dbReference type="Proteomes" id="UP000000799">
    <property type="component" value="Chromosome"/>
</dbReference>
<dbReference type="GO" id="GO:0005737">
    <property type="term" value="C:cytoplasm"/>
    <property type="evidence" value="ECO:0007669"/>
    <property type="project" value="UniProtKB-SubCell"/>
</dbReference>
<dbReference type="GO" id="GO:0004359">
    <property type="term" value="F:glutaminase activity"/>
    <property type="evidence" value="ECO:0007669"/>
    <property type="project" value="UniProtKB-EC"/>
</dbReference>
<dbReference type="GO" id="GO:0000107">
    <property type="term" value="F:imidazoleglycerol-phosphate synthase activity"/>
    <property type="evidence" value="ECO:0007669"/>
    <property type="project" value="UniProtKB-UniRule"/>
</dbReference>
<dbReference type="GO" id="GO:0016829">
    <property type="term" value="F:lyase activity"/>
    <property type="evidence" value="ECO:0007669"/>
    <property type="project" value="UniProtKB-KW"/>
</dbReference>
<dbReference type="GO" id="GO:0000105">
    <property type="term" value="P:L-histidine biosynthetic process"/>
    <property type="evidence" value="ECO:0007669"/>
    <property type="project" value="UniProtKB-UniRule"/>
</dbReference>
<dbReference type="CDD" id="cd01748">
    <property type="entry name" value="GATase1_IGP_Synthase"/>
    <property type="match status" value="1"/>
</dbReference>
<dbReference type="FunFam" id="3.40.50.880:FF:000009">
    <property type="entry name" value="Imidazole glycerol phosphate synthase subunit HisH"/>
    <property type="match status" value="1"/>
</dbReference>
<dbReference type="Gene3D" id="3.40.50.880">
    <property type="match status" value="1"/>
</dbReference>
<dbReference type="HAMAP" id="MF_00278">
    <property type="entry name" value="HisH"/>
    <property type="match status" value="1"/>
</dbReference>
<dbReference type="InterPro" id="IPR029062">
    <property type="entry name" value="Class_I_gatase-like"/>
</dbReference>
<dbReference type="InterPro" id="IPR017926">
    <property type="entry name" value="GATASE"/>
</dbReference>
<dbReference type="InterPro" id="IPR010139">
    <property type="entry name" value="Imidazole-glycPsynth_HisH"/>
</dbReference>
<dbReference type="NCBIfam" id="TIGR01855">
    <property type="entry name" value="IMP_synth_hisH"/>
    <property type="match status" value="1"/>
</dbReference>
<dbReference type="PANTHER" id="PTHR42701">
    <property type="entry name" value="IMIDAZOLE GLYCEROL PHOSPHATE SYNTHASE SUBUNIT HISH"/>
    <property type="match status" value="1"/>
</dbReference>
<dbReference type="PANTHER" id="PTHR42701:SF1">
    <property type="entry name" value="IMIDAZOLE GLYCEROL PHOSPHATE SYNTHASE SUBUNIT HISH"/>
    <property type="match status" value="1"/>
</dbReference>
<dbReference type="Pfam" id="PF00117">
    <property type="entry name" value="GATase"/>
    <property type="match status" value="1"/>
</dbReference>
<dbReference type="PIRSF" id="PIRSF000495">
    <property type="entry name" value="Amidotransf_hisH"/>
    <property type="match status" value="1"/>
</dbReference>
<dbReference type="SUPFAM" id="SSF52317">
    <property type="entry name" value="Class I glutamine amidotransferase-like"/>
    <property type="match status" value="1"/>
</dbReference>
<dbReference type="PROSITE" id="PS51273">
    <property type="entry name" value="GATASE_TYPE_1"/>
    <property type="match status" value="1"/>
</dbReference>
<gene>
    <name type="primary">hisH2</name>
    <name type="ordered locus">Cj1600</name>
</gene>
<proteinExistence type="inferred from homology"/>
<protein>
    <recommendedName>
        <fullName>Imidazole glycerol phosphate synthase subunit HisH 2</fullName>
        <ecNumber>4.3.2.10</ecNumber>
    </recommendedName>
    <alternativeName>
        <fullName>IGP synthase glutaminase subunit 2</fullName>
        <ecNumber>3.5.1.2</ecNumber>
    </alternativeName>
    <alternativeName>
        <fullName>IGP synthase subunit HisH 2</fullName>
    </alternativeName>
    <alternativeName>
        <fullName>ImGP synthase subunit HisH 2</fullName>
        <shortName>IGPS subunit HisH 2</shortName>
    </alternativeName>
</protein>
<sequence length="195" mass="21976">MKIIIIDTACANLASLKFCLDRLGFNATISRDLKELESADKLFLPGVGTAKEAMKNLEQFNLIDFIQNTKKPLLGICLGMQILGNFSEELNQETLKLIDFTTQKFKAKEGFTFPHMGWNEVYSSHALFKGLEGAYFYFVHSYCVGLGKYTIADCEYSQKFSASVMKDNFYGVQFHPERSSEAGEILISNFIKDIG</sequence>
<evidence type="ECO:0000250" key="1"/>
<accession>Q9PM75</accession>
<accession>Q0P828</accession>
<organism>
    <name type="scientific">Campylobacter jejuni subsp. jejuni serotype O:2 (strain ATCC 700819 / NCTC 11168)</name>
    <dbReference type="NCBI Taxonomy" id="192222"/>
    <lineage>
        <taxon>Bacteria</taxon>
        <taxon>Pseudomonadati</taxon>
        <taxon>Campylobacterota</taxon>
        <taxon>Epsilonproteobacteria</taxon>
        <taxon>Campylobacterales</taxon>
        <taxon>Campylobacteraceae</taxon>
        <taxon>Campylobacter</taxon>
    </lineage>
</organism>
<name>HIS52_CAMJE</name>
<feature type="chain" id="PRO_0000152362" description="Imidazole glycerol phosphate synthase subunit HisH 2">
    <location>
        <begin position="1"/>
        <end position="195"/>
    </location>
</feature>
<feature type="domain" description="Glutamine amidotransferase type-1">
    <location>
        <begin position="2"/>
        <end position="195"/>
    </location>
</feature>
<feature type="active site" description="Nucleophile" evidence="1">
    <location>
        <position position="77"/>
    </location>
</feature>
<feature type="active site" evidence="1">
    <location>
        <position position="175"/>
    </location>
</feature>
<feature type="active site" evidence="1">
    <location>
        <position position="177"/>
    </location>
</feature>